<comment type="function">
    <text evidence="2">Plays a role in the down-regulation of the host stress-induced NKG2D ligand UBPL1, which enables immune cells expressing the NKG2D receptor to recognize and annihilate infected cells prior to viral spread.</text>
</comment>
<comment type="subcellular location">
    <subcellularLocation>
        <location evidence="2">Host endoplasmic reticulum membrane</location>
        <topology evidence="3">Single-pass membrane protein</topology>
    </subcellularLocation>
    <subcellularLocation>
        <location evidence="2">Host lysosome membrane</location>
        <topology evidence="3">Single-pass membrane protein</topology>
    </subcellularLocation>
</comment>
<protein>
    <recommendedName>
        <fullName>Glycoprotein U20</fullName>
    </recommendedName>
</protein>
<dbReference type="EMBL" id="AF157706">
    <property type="protein sequence ID" value="AAD49632.1"/>
    <property type="molecule type" value="Genomic_DNA"/>
</dbReference>
<dbReference type="RefSeq" id="NP_050200.1">
    <property type="nucleotide sequence ID" value="NC_000898.1"/>
</dbReference>
<dbReference type="DNASU" id="1497016"/>
<dbReference type="GeneID" id="1497016"/>
<dbReference type="KEGG" id="vg:1497016"/>
<dbReference type="Proteomes" id="UP000006930">
    <property type="component" value="Segment"/>
</dbReference>
<dbReference type="GO" id="GO:0044167">
    <property type="term" value="C:host cell endoplasmic reticulum membrane"/>
    <property type="evidence" value="ECO:0007669"/>
    <property type="project" value="UniProtKB-SubCell"/>
</dbReference>
<dbReference type="GO" id="GO:0044188">
    <property type="term" value="C:host cell lysosomal membrane"/>
    <property type="evidence" value="ECO:0007669"/>
    <property type="project" value="UniProtKB-SubCell"/>
</dbReference>
<dbReference type="GO" id="GO:0016020">
    <property type="term" value="C:membrane"/>
    <property type="evidence" value="ECO:0007669"/>
    <property type="project" value="UniProtKB-KW"/>
</dbReference>
<dbReference type="GO" id="GO:0052170">
    <property type="term" value="P:symbiont-mediated suppression of host innate immune response"/>
    <property type="evidence" value="ECO:0007669"/>
    <property type="project" value="UniProtKB-KW"/>
</dbReference>
<dbReference type="Gene3D" id="2.60.40.10">
    <property type="entry name" value="Immunoglobulins"/>
    <property type="match status" value="1"/>
</dbReference>
<dbReference type="InterPro" id="IPR036179">
    <property type="entry name" value="Ig-like_dom_sf"/>
</dbReference>
<dbReference type="InterPro" id="IPR013783">
    <property type="entry name" value="Ig-like_fold"/>
</dbReference>
<dbReference type="InterPro" id="IPR003597">
    <property type="entry name" value="Ig_C1-set"/>
</dbReference>
<dbReference type="Pfam" id="PF07654">
    <property type="entry name" value="C1-set"/>
    <property type="match status" value="1"/>
</dbReference>
<dbReference type="SUPFAM" id="SSF48726">
    <property type="entry name" value="Immunoglobulin"/>
    <property type="match status" value="1"/>
</dbReference>
<accession>Q9QJ46</accession>
<name>U20_HHV6Z</name>
<organism>
    <name type="scientific">Human herpesvirus 6B (strain Z29)</name>
    <name type="common">HHV-6 variant B</name>
    <name type="synonym">Human B lymphotropic virus</name>
    <dbReference type="NCBI Taxonomy" id="36351"/>
    <lineage>
        <taxon>Viruses</taxon>
        <taxon>Duplodnaviria</taxon>
        <taxon>Heunggongvirae</taxon>
        <taxon>Peploviricota</taxon>
        <taxon>Herviviricetes</taxon>
        <taxon>Herpesvirales</taxon>
        <taxon>Orthoherpesviridae</taxon>
        <taxon>Betaherpesvirinae</taxon>
        <taxon>Roseolovirus</taxon>
        <taxon>Roseolovirus humanbeta6b</taxon>
        <taxon>Human herpesvirus 6B</taxon>
    </lineage>
</organism>
<gene>
    <name type="primary">U20</name>
</gene>
<reference key="1">
    <citation type="journal article" date="1999" name="J. Virol.">
        <title>Human herpesvirus 6B genome sequence: coding content and comparison with human herpesvirus 6A.</title>
        <authorList>
            <person name="Dominguez G."/>
            <person name="Dambaugh T.R."/>
            <person name="Stamey F.R."/>
            <person name="Dewhurst S."/>
            <person name="Inoue N."/>
            <person name="Pellett P.E."/>
        </authorList>
    </citation>
    <scope>NUCLEOTIDE SEQUENCE [LARGE SCALE GENOMIC DNA]</scope>
</reference>
<reference key="2">
    <citation type="journal article" date="2021" name="Front. Immunol.">
        <title>The HHV-6A Proteins U20 and U21 Target NKG2D Ligands to Escape Immune Recognition.</title>
        <authorList>
            <person name="Chaouat A.E."/>
            <person name="Seliger B."/>
            <person name="Mandelboim O."/>
            <person name="Schmiedel D."/>
        </authorList>
    </citation>
    <scope>FUNCTION</scope>
    <scope>SUBCELLULAR LOCATION</scope>
</reference>
<evidence type="ECO:0000255" key="1"/>
<evidence type="ECO:0000269" key="2">
    <source>
    </source>
</evidence>
<evidence type="ECO:0000305" key="3"/>
<feature type="signal peptide" evidence="1">
    <location>
        <begin position="1"/>
        <end position="15"/>
    </location>
</feature>
<feature type="chain" id="PRO_0000408423" description="Glycoprotein U20">
    <location>
        <begin position="16"/>
        <end position="434"/>
    </location>
</feature>
<feature type="transmembrane region" description="Helical" evidence="1">
    <location>
        <begin position="322"/>
        <end position="342"/>
    </location>
</feature>
<sequence length="434" mass="49742">MITVFVACLFQCVSSLPAKLYIKTTLAEGIGKLQTVIGIDNDIVFAYERLYGDLTLRNHTAVGETLFDLAGSLEEGKNSTVDRFLGHVVIREFHRLHAGLQYVSVQNFSVSELVCFVNNNTQLSGSYVFLARNTTYVQIDLFNENRSFVHDLINVSSFLQNRSLHVLSFYARRFCVEDILNFYGKVVFGDSKYRPPQVFSKRDTGLLVCTARRYRPIGTNIQWSLHNQTVSDDHTTDDFIRTEISGQLLYSYERALSRALSMTHREFSCEITHKLLVTPALLTREDAFSFKGFVNPVKESEDTFPRHNFPAPHRKKFNKLQLLWIFIVIPIAAGCMFLYILTRYIQFFVSGGSSSNPNRVLKRRRGNDEVPMVIMEVEYCNYEAENHDMELHSVQNVRDDSIAVVCGNNSFDIERQSIKSHESFSNVKLEMLPL</sequence>
<keyword id="KW-0325">Glycoprotein</keyword>
<keyword id="KW-1038">Host endoplasmic reticulum</keyword>
<keyword id="KW-1042">Host lysosome</keyword>
<keyword id="KW-1043">Host membrane</keyword>
<keyword id="KW-0945">Host-virus interaction</keyword>
<keyword id="KW-1090">Inhibition of host innate immune response by virus</keyword>
<keyword id="KW-0472">Membrane</keyword>
<keyword id="KW-1185">Reference proteome</keyword>
<keyword id="KW-0732">Signal</keyword>
<keyword id="KW-0812">Transmembrane</keyword>
<keyword id="KW-1133">Transmembrane helix</keyword>
<keyword id="KW-0899">Viral immunoevasion</keyword>
<proteinExistence type="inferred from homology"/>
<organismHost>
    <name type="scientific">Homo sapiens</name>
    <name type="common">Human</name>
    <dbReference type="NCBI Taxonomy" id="9606"/>
</organismHost>